<feature type="chain" id="PRO_1000061812" description="Ribosomal RNA large subunit methyltransferase H">
    <location>
        <begin position="1"/>
        <end position="156"/>
    </location>
</feature>
<feature type="binding site" evidence="1">
    <location>
        <position position="73"/>
    </location>
    <ligand>
        <name>S-adenosyl-L-methionine</name>
        <dbReference type="ChEBI" id="CHEBI:59789"/>
    </ligand>
</feature>
<feature type="binding site" evidence="1">
    <location>
        <position position="104"/>
    </location>
    <ligand>
        <name>S-adenosyl-L-methionine</name>
        <dbReference type="ChEBI" id="CHEBI:59789"/>
    </ligand>
</feature>
<feature type="binding site" evidence="1">
    <location>
        <begin position="123"/>
        <end position="128"/>
    </location>
    <ligand>
        <name>S-adenosyl-L-methionine</name>
        <dbReference type="ChEBI" id="CHEBI:59789"/>
    </ligand>
</feature>
<sequence length="156" mass="17462">MNITVLAVGTKMPRWVDEAVAEYAKRFGRDVAYVLKEIKPEKRGAGVNAAQGMAAEEKRILEAIPQGAFLVVLDERGKAPTSVELAEHLKTWQQNGEHVCFVIGGADGMTDRLKQQARMMMRLSSLTLPHGMVRVLLTEQLYRAASILHNHPYHRE</sequence>
<gene>
    <name evidence="1" type="primary">rlmH</name>
    <name type="ordered locus">NMC2001</name>
</gene>
<dbReference type="EC" id="2.1.1.177" evidence="1"/>
<dbReference type="EMBL" id="AM421808">
    <property type="protein sequence ID" value="CAM11157.1"/>
    <property type="molecule type" value="Genomic_DNA"/>
</dbReference>
<dbReference type="RefSeq" id="WP_002224684.1">
    <property type="nucleotide sequence ID" value="NC_008767.1"/>
</dbReference>
<dbReference type="SMR" id="A1KWA0"/>
<dbReference type="KEGG" id="nmc:NMC2001"/>
<dbReference type="HOGENOM" id="CLU_100552_1_0_4"/>
<dbReference type="Proteomes" id="UP000002286">
    <property type="component" value="Chromosome"/>
</dbReference>
<dbReference type="GO" id="GO:0005737">
    <property type="term" value="C:cytoplasm"/>
    <property type="evidence" value="ECO:0007669"/>
    <property type="project" value="UniProtKB-SubCell"/>
</dbReference>
<dbReference type="GO" id="GO:0070038">
    <property type="term" value="F:rRNA (pseudouridine-N3-)-methyltransferase activity"/>
    <property type="evidence" value="ECO:0007669"/>
    <property type="project" value="UniProtKB-UniRule"/>
</dbReference>
<dbReference type="CDD" id="cd18081">
    <property type="entry name" value="RlmH-like"/>
    <property type="match status" value="1"/>
</dbReference>
<dbReference type="Gene3D" id="3.40.1280.10">
    <property type="match status" value="1"/>
</dbReference>
<dbReference type="HAMAP" id="MF_00658">
    <property type="entry name" value="23SrRNA_methyltr_H"/>
    <property type="match status" value="1"/>
</dbReference>
<dbReference type="InterPro" id="IPR029028">
    <property type="entry name" value="Alpha/beta_knot_MTases"/>
</dbReference>
<dbReference type="InterPro" id="IPR003742">
    <property type="entry name" value="RlmH-like"/>
</dbReference>
<dbReference type="InterPro" id="IPR029026">
    <property type="entry name" value="tRNA_m1G_MTases_N"/>
</dbReference>
<dbReference type="NCBIfam" id="NF000986">
    <property type="entry name" value="PRK00103.1-4"/>
    <property type="match status" value="1"/>
</dbReference>
<dbReference type="PANTHER" id="PTHR33603">
    <property type="entry name" value="METHYLTRANSFERASE"/>
    <property type="match status" value="1"/>
</dbReference>
<dbReference type="PANTHER" id="PTHR33603:SF1">
    <property type="entry name" value="RIBOSOMAL RNA LARGE SUBUNIT METHYLTRANSFERASE H"/>
    <property type="match status" value="1"/>
</dbReference>
<dbReference type="Pfam" id="PF02590">
    <property type="entry name" value="SPOUT_MTase"/>
    <property type="match status" value="1"/>
</dbReference>
<dbReference type="PIRSF" id="PIRSF004505">
    <property type="entry name" value="MT_bac"/>
    <property type="match status" value="1"/>
</dbReference>
<dbReference type="SUPFAM" id="SSF75217">
    <property type="entry name" value="alpha/beta knot"/>
    <property type="match status" value="1"/>
</dbReference>
<proteinExistence type="inferred from homology"/>
<comment type="function">
    <text evidence="1">Specifically methylates the pseudouridine at position 1915 (m3Psi1915) in 23S rRNA.</text>
</comment>
<comment type="catalytic activity">
    <reaction evidence="1">
        <text>pseudouridine(1915) in 23S rRNA + S-adenosyl-L-methionine = N(3)-methylpseudouridine(1915) in 23S rRNA + S-adenosyl-L-homocysteine + H(+)</text>
        <dbReference type="Rhea" id="RHEA:42752"/>
        <dbReference type="Rhea" id="RHEA-COMP:10221"/>
        <dbReference type="Rhea" id="RHEA-COMP:10222"/>
        <dbReference type="ChEBI" id="CHEBI:15378"/>
        <dbReference type="ChEBI" id="CHEBI:57856"/>
        <dbReference type="ChEBI" id="CHEBI:59789"/>
        <dbReference type="ChEBI" id="CHEBI:65314"/>
        <dbReference type="ChEBI" id="CHEBI:74486"/>
        <dbReference type="EC" id="2.1.1.177"/>
    </reaction>
</comment>
<comment type="subunit">
    <text evidence="1">Homodimer.</text>
</comment>
<comment type="subcellular location">
    <subcellularLocation>
        <location evidence="1">Cytoplasm</location>
    </subcellularLocation>
</comment>
<comment type="similarity">
    <text evidence="1">Belongs to the RNA methyltransferase RlmH family.</text>
</comment>
<evidence type="ECO:0000255" key="1">
    <source>
        <dbReference type="HAMAP-Rule" id="MF_00658"/>
    </source>
</evidence>
<accession>A1KWA0</accession>
<keyword id="KW-0963">Cytoplasm</keyword>
<keyword id="KW-0489">Methyltransferase</keyword>
<keyword id="KW-0698">rRNA processing</keyword>
<keyword id="KW-0949">S-adenosyl-L-methionine</keyword>
<keyword id="KW-0808">Transferase</keyword>
<organism>
    <name type="scientific">Neisseria meningitidis serogroup C / serotype 2a (strain ATCC 700532 / DSM 15464 / FAM18)</name>
    <dbReference type="NCBI Taxonomy" id="272831"/>
    <lineage>
        <taxon>Bacteria</taxon>
        <taxon>Pseudomonadati</taxon>
        <taxon>Pseudomonadota</taxon>
        <taxon>Betaproteobacteria</taxon>
        <taxon>Neisseriales</taxon>
        <taxon>Neisseriaceae</taxon>
        <taxon>Neisseria</taxon>
    </lineage>
</organism>
<reference key="1">
    <citation type="journal article" date="2007" name="PLoS Genet.">
        <title>Meningococcal genetic variation mechanisms viewed through comparative analysis of serogroup C strain FAM18.</title>
        <authorList>
            <person name="Bentley S.D."/>
            <person name="Vernikos G.S."/>
            <person name="Snyder L.A.S."/>
            <person name="Churcher C."/>
            <person name="Arrowsmith C."/>
            <person name="Chillingworth T."/>
            <person name="Cronin A."/>
            <person name="Davis P.H."/>
            <person name="Holroyd N.E."/>
            <person name="Jagels K."/>
            <person name="Maddison M."/>
            <person name="Moule S."/>
            <person name="Rabbinowitsch E."/>
            <person name="Sharp S."/>
            <person name="Unwin L."/>
            <person name="Whitehead S."/>
            <person name="Quail M.A."/>
            <person name="Achtman M."/>
            <person name="Barrell B.G."/>
            <person name="Saunders N.J."/>
            <person name="Parkhill J."/>
        </authorList>
    </citation>
    <scope>NUCLEOTIDE SEQUENCE [LARGE SCALE GENOMIC DNA]</scope>
    <source>
        <strain>ATCC 700532 / DSM 15464 / FAM18</strain>
    </source>
</reference>
<protein>
    <recommendedName>
        <fullName evidence="1">Ribosomal RNA large subunit methyltransferase H</fullName>
        <ecNumber evidence="1">2.1.1.177</ecNumber>
    </recommendedName>
    <alternativeName>
        <fullName evidence="1">23S rRNA (pseudouridine1915-N3)-methyltransferase</fullName>
    </alternativeName>
    <alternativeName>
        <fullName evidence="1">23S rRNA m3Psi1915 methyltransferase</fullName>
    </alternativeName>
    <alternativeName>
        <fullName evidence="1">rRNA (pseudouridine-N3-)-methyltransferase RlmH</fullName>
    </alternativeName>
</protein>
<name>RLMH_NEIMF</name>